<reference key="1">
    <citation type="journal article" date="2005" name="J. Gen. Virol.">
        <title>A new subtype (subgenotype) Ac (A3) of hepatitis B virus and recombination between genotypes A and E in Cameroon.</title>
        <authorList>
            <person name="Kurbanov F."/>
            <person name="Tanaka Y."/>
            <person name="Fujiwara K."/>
            <person name="Sugauchi F."/>
            <person name="Mbanya D."/>
            <person name="Zekeng L."/>
            <person name="Ndembi N."/>
            <person name="Ngansop C."/>
            <person name="Kaptue L."/>
            <person name="Miura T."/>
            <person name="Ido E."/>
            <person name="Hayami M."/>
            <person name="Ichimura H."/>
            <person name="Mizokami M."/>
        </authorList>
    </citation>
    <scope>NUCLEOTIDE SEQUENCE [GENOMIC DNA]</scope>
</reference>
<reference key="2">
    <citation type="journal article" date="2004" name="J. Virol.">
        <title>The enigmatic X gene of hepatitis B virus.</title>
        <authorList>
            <person name="Bouchard M.J."/>
            <person name="Schneider R.J."/>
        </authorList>
    </citation>
    <scope>REVIEW</scope>
</reference>
<reference key="3">
    <citation type="journal article" date="2006" name="Cancer Sci.">
        <title>Molecular functions and biological roles of hepatitis B virus x protein.</title>
        <authorList>
            <person name="Tang H."/>
            <person name="Oishi N."/>
            <person name="Kaneko S."/>
            <person name="Murakami S."/>
        </authorList>
    </citation>
    <scope>REVIEW</scope>
</reference>
<sequence>MAARLYCQLDSSRDVLCLRPVGAESRGRPFSGPLGTLSSPSPSAVSSDHGAHLSLRGLPVCAFSSAGPCALRFTSARCMATTVNAHQILPKVLHKRTLGLPAMSTTDLEAYFKDCLFKDWEELGEEIRLKVFVLGGCRHKLVCAPSSCNFFTSA</sequence>
<organism>
    <name type="scientific">Hepatitis B virus genotype A3 (isolate Cameroon/CMR983/1994)</name>
    <name type="common">HBV-A</name>
    <dbReference type="NCBI Taxonomy" id="489458"/>
    <lineage>
        <taxon>Viruses</taxon>
        <taxon>Riboviria</taxon>
        <taxon>Pararnavirae</taxon>
        <taxon>Artverviricota</taxon>
        <taxon>Revtraviricetes</taxon>
        <taxon>Blubervirales</taxon>
        <taxon>Hepadnaviridae</taxon>
        <taxon>Orthohepadnavirus</taxon>
        <taxon>Hepatitis B virus</taxon>
    </lineage>
</organism>
<gene>
    <name evidence="1" type="primary">X</name>
</gene>
<proteinExistence type="inferred from homology"/>
<keyword id="KW-1074">Activation of host NF-kappa-B by virus</keyword>
<keyword id="KW-0010">Activator</keyword>
<keyword id="KW-0053">Apoptosis</keyword>
<keyword id="KW-1035">Host cytoplasm</keyword>
<keyword id="KW-1079">Host G2/M cell cycle arrest by virus</keyword>
<keyword id="KW-1045">Host mitochondrion</keyword>
<keyword id="KW-1048">Host nucleus</keyword>
<keyword id="KW-0945">Host-virus interaction</keyword>
<keyword id="KW-1121">Modulation of host cell cycle by virus</keyword>
<keyword id="KW-0804">Transcription</keyword>
<keyword id="KW-0805">Transcription regulation</keyword>
<dbReference type="EMBL" id="AB194950">
    <property type="protein sequence ID" value="BAE00087.1"/>
    <property type="molecule type" value="Genomic_DNA"/>
</dbReference>
<dbReference type="SMR" id="Q4R1S9"/>
<dbReference type="Proteomes" id="UP000007911">
    <property type="component" value="Genome"/>
</dbReference>
<dbReference type="GO" id="GO:0033650">
    <property type="term" value="C:host cell mitochondrion"/>
    <property type="evidence" value="ECO:0007669"/>
    <property type="project" value="UniProtKB-SubCell"/>
</dbReference>
<dbReference type="GO" id="GO:0042025">
    <property type="term" value="C:host cell nucleus"/>
    <property type="evidence" value="ECO:0007669"/>
    <property type="project" value="UniProtKB-SubCell"/>
</dbReference>
<dbReference type="GO" id="GO:0006351">
    <property type="term" value="P:DNA-templated transcription"/>
    <property type="evidence" value="ECO:0007669"/>
    <property type="project" value="UniProtKB-UniRule"/>
</dbReference>
<dbReference type="GO" id="GO:0085033">
    <property type="term" value="P:symbiont-mediated activation of host NF-kappaB cascade"/>
    <property type="evidence" value="ECO:0007669"/>
    <property type="project" value="UniProtKB-UniRule"/>
</dbReference>
<dbReference type="GO" id="GO:0039592">
    <property type="term" value="P:symbiont-mediated arrest of host cell cycle during G2/M transition"/>
    <property type="evidence" value="ECO:0007669"/>
    <property type="project" value="UniProtKB-UniRule"/>
</dbReference>
<dbReference type="GO" id="GO:0019079">
    <property type="term" value="P:viral genome replication"/>
    <property type="evidence" value="ECO:0007669"/>
    <property type="project" value="UniProtKB-UniRule"/>
</dbReference>
<dbReference type="HAMAP" id="MF_04074">
    <property type="entry name" value="HBV_X"/>
    <property type="match status" value="1"/>
</dbReference>
<dbReference type="InterPro" id="IPR000236">
    <property type="entry name" value="Transactivation_prot_X"/>
</dbReference>
<dbReference type="Pfam" id="PF00739">
    <property type="entry name" value="X"/>
    <property type="match status" value="1"/>
</dbReference>
<organismHost>
    <name type="scientific">Homo sapiens</name>
    <name type="common">Human</name>
    <dbReference type="NCBI Taxonomy" id="9606"/>
</organismHost>
<organismHost>
    <name type="scientific">Pan troglodytes</name>
    <name type="common">Chimpanzee</name>
    <dbReference type="NCBI Taxonomy" id="9598"/>
</organismHost>
<protein>
    <recommendedName>
        <fullName evidence="1">Protein X</fullName>
    </recommendedName>
    <alternativeName>
        <fullName evidence="1">HBx</fullName>
    </alternativeName>
    <alternativeName>
        <fullName evidence="1">Peptide X</fullName>
    </alternativeName>
    <alternativeName>
        <fullName evidence="1">pX</fullName>
    </alternativeName>
</protein>
<accession>Q4R1S9</accession>
<feature type="chain" id="PRO_0000319897" description="Protein X">
    <location>
        <begin position="1"/>
        <end position="154"/>
    </location>
</feature>
<feature type="region of interest" description="Mitochondrial targeting sequence" evidence="1">
    <location>
        <begin position="68"/>
        <end position="117"/>
    </location>
</feature>
<name>X_HBVA8</name>
<comment type="function">
    <text evidence="1">Multifunctional protein that plays a role in silencing host antiviral defenses and promoting viral transcription. Does not seem to be essential for HBV infection. May be directly involved in development of cirrhosis and liver cancer (hepatocellular carcinoma). Most of cytosolic activities involve modulation of cytosolic calcium. The effect on apoptosis is controversial depending on the cell types in which the studies have been conducted. May induce apoptosis by localizing in mitochondria and causing loss of mitochondrial membrane potential. May also modulate apoptosis by binding host CFLAR, a key regulator of the death-inducing signaling complex (DISC). Promotes viral transcription by using the host E3 ubiquitin ligase DDB1 to target the SMC5-SMC6 complex to proteasomal degradation. This host complex would otherwise bind to viral episomal DNA, and prevents its transcription. Moderately stimulates transcription of many different viral and cellular transcription elements. Promoters and enhancers stimulated by HBx contain DNA binding sites for NF-kappa-B, AP-1, AP-2, c-EBP, ATF/CREB, or the calcium-activated factor NF-AT.</text>
</comment>
<comment type="subunit">
    <text evidence="1">May form homodimer. May interact with host CEBPA, CFLAR, CREB1, DDB1, E4F1, HBXIP, HSPD1/HSP60, NFKBIA, POLR2E and SMAD4. Interacts with host SMC5-SMC6 complex and induces its degradation. Interacts with host TRPC4AP; leading to prevent ubiquitination of TRPC4AP. Interacts with host PLSCR1; this interaction promotes ubiquitination and degradation of HBx and impairs HBx-mediated cell proliferation.</text>
</comment>
<comment type="subcellular location">
    <subcellularLocation>
        <location evidence="1">Host cytoplasm</location>
    </subcellularLocation>
    <subcellularLocation>
        <location evidence="1">Host nucleus</location>
    </subcellularLocation>
    <subcellularLocation>
        <location evidence="1">Host mitochondrion</location>
    </subcellularLocation>
    <text evidence="1">Mainly cytoplasmic as only a fraction is detected in the nucleus. In cytoplasm, a minor fraction associates with mitochondria or proteasomes.</text>
</comment>
<comment type="PTM">
    <text evidence="1">A fraction may be phosphorylated in insect cells and HepG2 cells, a human hepatoblastoma cell line. Phosphorylated in vitro by host protein kinase C or mitogen-activated protein kinase. N-acetylated in insect cells.</text>
</comment>
<comment type="similarity">
    <text evidence="1">Belongs to the orthohepadnavirus protein X family.</text>
</comment>
<comment type="caution">
    <text>Transcriptional activities should be taken with a grain of salt. As of 2007, all studies demonstrating in vivo interaction between protein X and transcriptional components were performed with significant overexpression of both proteins and in the absence of viral infection.</text>
</comment>
<evidence type="ECO:0000255" key="1">
    <source>
        <dbReference type="HAMAP-Rule" id="MF_04074"/>
    </source>
</evidence>